<sequence length="246" mass="27668">MRKPVIAGNWKMNMTCTEAIEYMRVLIPLLKDIPKKDREVVIAPPFTALYPLSEFIRDKNDCLSLSSQNVHWEDSGAYTAEVSPLMLNELSVKCAIVGHSEPRKYFSESDEQINKRAKSAQDHQLIPIVCVGETFQQREMGEAERVIRRQIEQGLEGIEVKKLIVAYEPIWAIGTGKTCEANEANRICGLIRKWIGYEDVIIQYGGSVKSNNIDEIMSMSDIDGVLVGGASLDPTNFARIANYEKI</sequence>
<proteinExistence type="inferred from homology"/>
<organism>
    <name type="scientific">Prochlorococcus marinus (strain NATL1A)</name>
    <dbReference type="NCBI Taxonomy" id="167555"/>
    <lineage>
        <taxon>Bacteria</taxon>
        <taxon>Bacillati</taxon>
        <taxon>Cyanobacteriota</taxon>
        <taxon>Cyanophyceae</taxon>
        <taxon>Synechococcales</taxon>
        <taxon>Prochlorococcaceae</taxon>
        <taxon>Prochlorococcus</taxon>
    </lineage>
</organism>
<gene>
    <name evidence="1" type="primary">tpiA</name>
    <name type="ordered locus">NATL1_10641</name>
</gene>
<evidence type="ECO:0000255" key="1">
    <source>
        <dbReference type="HAMAP-Rule" id="MF_00147"/>
    </source>
</evidence>
<keyword id="KW-0963">Cytoplasm</keyword>
<keyword id="KW-0312">Gluconeogenesis</keyword>
<keyword id="KW-0324">Glycolysis</keyword>
<keyword id="KW-0413">Isomerase</keyword>
<feature type="chain" id="PRO_0000307528" description="Triosephosphate isomerase">
    <location>
        <begin position="1"/>
        <end position="246"/>
    </location>
</feature>
<feature type="active site" description="Electrophile" evidence="1">
    <location>
        <position position="99"/>
    </location>
</feature>
<feature type="active site" description="Proton acceptor" evidence="1">
    <location>
        <position position="168"/>
    </location>
</feature>
<feature type="binding site" evidence="1">
    <location>
        <begin position="9"/>
        <end position="11"/>
    </location>
    <ligand>
        <name>substrate</name>
    </ligand>
</feature>
<feature type="binding site" evidence="1">
    <location>
        <position position="174"/>
    </location>
    <ligand>
        <name>substrate</name>
    </ligand>
</feature>
<feature type="binding site" evidence="1">
    <location>
        <position position="207"/>
    </location>
    <ligand>
        <name>substrate</name>
    </ligand>
</feature>
<feature type="binding site" evidence="1">
    <location>
        <begin position="228"/>
        <end position="229"/>
    </location>
    <ligand>
        <name>substrate</name>
    </ligand>
</feature>
<protein>
    <recommendedName>
        <fullName evidence="1">Triosephosphate isomerase</fullName>
        <shortName evidence="1">TIM</shortName>
        <shortName evidence="1">TPI</shortName>
        <ecNumber evidence="1">5.3.1.1</ecNumber>
    </recommendedName>
    <alternativeName>
        <fullName evidence="1">Triose-phosphate isomerase</fullName>
    </alternativeName>
</protein>
<reference key="1">
    <citation type="journal article" date="2007" name="PLoS Genet.">
        <title>Patterns and implications of gene gain and loss in the evolution of Prochlorococcus.</title>
        <authorList>
            <person name="Kettler G.C."/>
            <person name="Martiny A.C."/>
            <person name="Huang K."/>
            <person name="Zucker J."/>
            <person name="Coleman M.L."/>
            <person name="Rodrigue S."/>
            <person name="Chen F."/>
            <person name="Lapidus A."/>
            <person name="Ferriera S."/>
            <person name="Johnson J."/>
            <person name="Steglich C."/>
            <person name="Church G.M."/>
            <person name="Richardson P."/>
            <person name="Chisholm S.W."/>
        </authorList>
    </citation>
    <scope>NUCLEOTIDE SEQUENCE [LARGE SCALE GENOMIC DNA]</scope>
    <source>
        <strain>NATL1A</strain>
    </source>
</reference>
<name>TPIS_PROM1</name>
<comment type="function">
    <text evidence="1">Involved in the gluconeogenesis. Catalyzes stereospecifically the conversion of dihydroxyacetone phosphate (DHAP) to D-glyceraldehyde-3-phosphate (G3P).</text>
</comment>
<comment type="catalytic activity">
    <reaction evidence="1">
        <text>D-glyceraldehyde 3-phosphate = dihydroxyacetone phosphate</text>
        <dbReference type="Rhea" id="RHEA:18585"/>
        <dbReference type="ChEBI" id="CHEBI:57642"/>
        <dbReference type="ChEBI" id="CHEBI:59776"/>
        <dbReference type="EC" id="5.3.1.1"/>
    </reaction>
</comment>
<comment type="pathway">
    <text evidence="1">Carbohydrate biosynthesis; gluconeogenesis.</text>
</comment>
<comment type="pathway">
    <text evidence="1">Carbohydrate degradation; glycolysis; D-glyceraldehyde 3-phosphate from glycerone phosphate: step 1/1.</text>
</comment>
<comment type="subunit">
    <text evidence="1">Homodimer.</text>
</comment>
<comment type="subcellular location">
    <subcellularLocation>
        <location evidence="1">Cytoplasm</location>
    </subcellularLocation>
</comment>
<comment type="similarity">
    <text evidence="1">Belongs to the triosephosphate isomerase family.</text>
</comment>
<accession>A2C2B2</accession>
<dbReference type="EC" id="5.3.1.1" evidence="1"/>
<dbReference type="EMBL" id="CP000553">
    <property type="protein sequence ID" value="ABM75622.1"/>
    <property type="molecule type" value="Genomic_DNA"/>
</dbReference>
<dbReference type="RefSeq" id="WP_011823741.1">
    <property type="nucleotide sequence ID" value="NC_008819.1"/>
</dbReference>
<dbReference type="SMR" id="A2C2B2"/>
<dbReference type="KEGG" id="pme:NATL1_10641"/>
<dbReference type="eggNOG" id="COG0149">
    <property type="taxonomic scope" value="Bacteria"/>
</dbReference>
<dbReference type="HOGENOM" id="CLU_024251_2_3_3"/>
<dbReference type="UniPathway" id="UPA00109">
    <property type="reaction ID" value="UER00189"/>
</dbReference>
<dbReference type="UniPathway" id="UPA00138"/>
<dbReference type="Proteomes" id="UP000002592">
    <property type="component" value="Chromosome"/>
</dbReference>
<dbReference type="GO" id="GO:0005829">
    <property type="term" value="C:cytosol"/>
    <property type="evidence" value="ECO:0007669"/>
    <property type="project" value="TreeGrafter"/>
</dbReference>
<dbReference type="GO" id="GO:0004807">
    <property type="term" value="F:triose-phosphate isomerase activity"/>
    <property type="evidence" value="ECO:0007669"/>
    <property type="project" value="UniProtKB-UniRule"/>
</dbReference>
<dbReference type="GO" id="GO:0006094">
    <property type="term" value="P:gluconeogenesis"/>
    <property type="evidence" value="ECO:0007669"/>
    <property type="project" value="UniProtKB-UniRule"/>
</dbReference>
<dbReference type="GO" id="GO:0046166">
    <property type="term" value="P:glyceraldehyde-3-phosphate biosynthetic process"/>
    <property type="evidence" value="ECO:0007669"/>
    <property type="project" value="TreeGrafter"/>
</dbReference>
<dbReference type="GO" id="GO:0019563">
    <property type="term" value="P:glycerol catabolic process"/>
    <property type="evidence" value="ECO:0007669"/>
    <property type="project" value="TreeGrafter"/>
</dbReference>
<dbReference type="GO" id="GO:0006096">
    <property type="term" value="P:glycolytic process"/>
    <property type="evidence" value="ECO:0007669"/>
    <property type="project" value="UniProtKB-UniRule"/>
</dbReference>
<dbReference type="CDD" id="cd00311">
    <property type="entry name" value="TIM"/>
    <property type="match status" value="1"/>
</dbReference>
<dbReference type="FunFam" id="3.20.20.70:FF:000016">
    <property type="entry name" value="Triosephosphate isomerase"/>
    <property type="match status" value="1"/>
</dbReference>
<dbReference type="Gene3D" id="3.20.20.70">
    <property type="entry name" value="Aldolase class I"/>
    <property type="match status" value="1"/>
</dbReference>
<dbReference type="HAMAP" id="MF_00147_B">
    <property type="entry name" value="TIM_B"/>
    <property type="match status" value="1"/>
</dbReference>
<dbReference type="InterPro" id="IPR013785">
    <property type="entry name" value="Aldolase_TIM"/>
</dbReference>
<dbReference type="InterPro" id="IPR035990">
    <property type="entry name" value="TIM_sf"/>
</dbReference>
<dbReference type="InterPro" id="IPR022896">
    <property type="entry name" value="TrioseP_Isoase_bac/euk"/>
</dbReference>
<dbReference type="InterPro" id="IPR000652">
    <property type="entry name" value="Triosephosphate_isomerase"/>
</dbReference>
<dbReference type="InterPro" id="IPR020861">
    <property type="entry name" value="Triosephosphate_isomerase_AS"/>
</dbReference>
<dbReference type="NCBIfam" id="TIGR00419">
    <property type="entry name" value="tim"/>
    <property type="match status" value="1"/>
</dbReference>
<dbReference type="PANTHER" id="PTHR21139">
    <property type="entry name" value="TRIOSEPHOSPHATE ISOMERASE"/>
    <property type="match status" value="1"/>
</dbReference>
<dbReference type="PANTHER" id="PTHR21139:SF42">
    <property type="entry name" value="TRIOSEPHOSPHATE ISOMERASE"/>
    <property type="match status" value="1"/>
</dbReference>
<dbReference type="Pfam" id="PF00121">
    <property type="entry name" value="TIM"/>
    <property type="match status" value="1"/>
</dbReference>
<dbReference type="SUPFAM" id="SSF51351">
    <property type="entry name" value="Triosephosphate isomerase (TIM)"/>
    <property type="match status" value="1"/>
</dbReference>
<dbReference type="PROSITE" id="PS00171">
    <property type="entry name" value="TIM_1"/>
    <property type="match status" value="1"/>
</dbReference>
<dbReference type="PROSITE" id="PS51440">
    <property type="entry name" value="TIM_2"/>
    <property type="match status" value="1"/>
</dbReference>